<proteinExistence type="evidence at protein level"/>
<keyword id="KW-0002">3D-structure</keyword>
<keyword id="KW-0067">ATP-binding</keyword>
<keyword id="KW-0173">Coenzyme A biosynthesis</keyword>
<keyword id="KW-0963">Cytoplasm</keyword>
<keyword id="KW-0460">Magnesium</keyword>
<keyword id="KW-0547">Nucleotide-binding</keyword>
<keyword id="KW-0548">Nucleotidyltransferase</keyword>
<keyword id="KW-0808">Transferase</keyword>
<reference key="1">
    <citation type="journal article" date="2009" name="Genome Res.">
        <title>Newly introduced genomic prophage islands are critical determinants of in vivo competitiveness in the Liverpool epidemic strain of Pseudomonas aeruginosa.</title>
        <authorList>
            <person name="Winstanley C."/>
            <person name="Langille M.G.I."/>
            <person name="Fothergill J.L."/>
            <person name="Kukavica-Ibrulj I."/>
            <person name="Paradis-Bleau C."/>
            <person name="Sanschagrin F."/>
            <person name="Thomson N.R."/>
            <person name="Winsor G.L."/>
            <person name="Quail M.A."/>
            <person name="Lennard N."/>
            <person name="Bignell A."/>
            <person name="Clarke L."/>
            <person name="Seeger K."/>
            <person name="Saunders D."/>
            <person name="Harris D."/>
            <person name="Parkhill J."/>
            <person name="Hancock R.E.W."/>
            <person name="Brinkman F.S.L."/>
            <person name="Levesque R.C."/>
        </authorList>
    </citation>
    <scope>NUCLEOTIDE SEQUENCE [LARGE SCALE GENOMIC DNA]</scope>
    <source>
        <strain>LESB58</strain>
    </source>
</reference>
<reference key="2">
    <citation type="submission" date="2016-11" db="PDB data bank">
        <title>Crystal structure of a phosphopantetheine adenylyltransferas (PPAT) from Pseudomonas aeruginosa bound to dephospho coenzyme A.</title>
        <authorList>
            <consortium name="Seattle structural genomics center for infectious disease (SSGCID)"/>
        </authorList>
    </citation>
    <scope>X-RAY CRYSTALLOGRAPHY (2.3 ANGSTROMS) IN COMPLEX WITH 3'-DEPHOSPHO-COA</scope>
    <source>
        <strain>LESB58</strain>
    </source>
</reference>
<organism>
    <name type="scientific">Pseudomonas aeruginosa (strain LESB58)</name>
    <dbReference type="NCBI Taxonomy" id="557722"/>
    <lineage>
        <taxon>Bacteria</taxon>
        <taxon>Pseudomonadati</taxon>
        <taxon>Pseudomonadota</taxon>
        <taxon>Gammaproteobacteria</taxon>
        <taxon>Pseudomonadales</taxon>
        <taxon>Pseudomonadaceae</taxon>
        <taxon>Pseudomonas</taxon>
    </lineage>
</organism>
<protein>
    <recommendedName>
        <fullName evidence="1">Phosphopantetheine adenylyltransferase</fullName>
        <ecNumber evidence="1">2.7.7.3</ecNumber>
    </recommendedName>
    <alternativeName>
        <fullName evidence="1">Dephospho-CoA pyrophosphorylase</fullName>
    </alternativeName>
    <alternativeName>
        <fullName evidence="1">Pantetheine-phosphate adenylyltransferase</fullName>
        <shortName evidence="1">PPAT</shortName>
    </alternativeName>
</protein>
<evidence type="ECO:0000255" key="1">
    <source>
        <dbReference type="HAMAP-Rule" id="MF_00151"/>
    </source>
</evidence>
<evidence type="ECO:0000305" key="2">
    <source ref="2"/>
</evidence>
<evidence type="ECO:0007829" key="3">
    <source>
        <dbReference type="PDB" id="5TS2"/>
    </source>
</evidence>
<accession>B7V2S6</accession>
<feature type="chain" id="PRO_1000118084" description="Phosphopantetheine adenylyltransferase">
    <location>
        <begin position="1"/>
        <end position="159"/>
    </location>
</feature>
<feature type="binding site" evidence="1 2">
    <location>
        <begin position="9"/>
        <end position="10"/>
    </location>
    <ligand>
        <name>ATP</name>
        <dbReference type="ChEBI" id="CHEBI:30616"/>
    </ligand>
</feature>
<feature type="binding site" evidence="1">
    <location>
        <position position="9"/>
    </location>
    <ligand>
        <name>substrate</name>
    </ligand>
</feature>
<feature type="binding site" evidence="1">
    <location>
        <position position="17"/>
    </location>
    <ligand>
        <name>ATP</name>
        <dbReference type="ChEBI" id="CHEBI:30616"/>
    </ligand>
</feature>
<feature type="binding site" evidence="1">
    <location>
        <position position="41"/>
    </location>
    <ligand>
        <name>substrate</name>
    </ligand>
</feature>
<feature type="binding site" evidence="1 2">
    <location>
        <position position="73"/>
    </location>
    <ligand>
        <name>substrate</name>
    </ligand>
</feature>
<feature type="binding site" evidence="1 2">
    <location>
        <position position="87"/>
    </location>
    <ligand>
        <name>substrate</name>
    </ligand>
</feature>
<feature type="binding site" evidence="1">
    <location>
        <begin position="88"/>
        <end position="90"/>
    </location>
    <ligand>
        <name>ATP</name>
        <dbReference type="ChEBI" id="CHEBI:30616"/>
    </ligand>
</feature>
<feature type="binding site" evidence="1">
    <location>
        <position position="98"/>
    </location>
    <ligand>
        <name>ATP</name>
        <dbReference type="ChEBI" id="CHEBI:30616"/>
    </ligand>
</feature>
<feature type="binding site" evidence="1">
    <location>
        <begin position="123"/>
        <end position="129"/>
    </location>
    <ligand>
        <name>ATP</name>
        <dbReference type="ChEBI" id="CHEBI:30616"/>
    </ligand>
</feature>
<feature type="site" description="Transition state stabilizer" evidence="1">
    <location>
        <position position="17"/>
    </location>
</feature>
<feature type="strand" evidence="3">
    <location>
        <begin position="3"/>
        <end position="8"/>
    </location>
</feature>
<feature type="helix" evidence="3">
    <location>
        <begin position="15"/>
        <end position="27"/>
    </location>
</feature>
<feature type="strand" evidence="3">
    <location>
        <begin position="28"/>
        <end position="36"/>
    </location>
</feature>
<feature type="helix" evidence="3">
    <location>
        <begin position="39"/>
        <end position="41"/>
    </location>
</feature>
<feature type="helix" evidence="3">
    <location>
        <begin position="47"/>
        <end position="58"/>
    </location>
</feature>
<feature type="strand" evidence="3">
    <location>
        <begin position="64"/>
        <end position="69"/>
    </location>
</feature>
<feature type="helix" evidence="3">
    <location>
        <begin position="73"/>
        <end position="79"/>
    </location>
</feature>
<feature type="strand" evidence="3">
    <location>
        <begin position="84"/>
        <end position="88"/>
    </location>
</feature>
<feature type="helix" evidence="3">
    <location>
        <begin position="95"/>
        <end position="108"/>
    </location>
</feature>
<feature type="strand" evidence="3">
    <location>
        <begin position="112"/>
        <end position="117"/>
    </location>
</feature>
<feature type="helix" evidence="3">
    <location>
        <begin position="121"/>
        <end position="123"/>
    </location>
</feature>
<feature type="helix" evidence="3">
    <location>
        <begin position="128"/>
        <end position="136"/>
    </location>
</feature>
<feature type="turn" evidence="3">
    <location>
        <begin position="142"/>
        <end position="144"/>
    </location>
</feature>
<feature type="helix" evidence="3">
    <location>
        <begin position="147"/>
        <end position="157"/>
    </location>
</feature>
<dbReference type="EC" id="2.7.7.3" evidence="1"/>
<dbReference type="EMBL" id="FM209186">
    <property type="protein sequence ID" value="CAW25087.1"/>
    <property type="molecule type" value="Genomic_DNA"/>
</dbReference>
<dbReference type="RefSeq" id="WP_003084466.1">
    <property type="nucleotide sequence ID" value="NC_011770.1"/>
</dbReference>
<dbReference type="PDB" id="5TS2">
    <property type="method" value="X-ray"/>
    <property type="resolution" value="2.30 A"/>
    <property type="chains" value="A/B/C/D/E/F=1-159"/>
</dbReference>
<dbReference type="PDBsum" id="5TS2"/>
<dbReference type="SMR" id="B7V2S6"/>
<dbReference type="GeneID" id="77218883"/>
<dbReference type="KEGG" id="pag:PLES_03601"/>
<dbReference type="HOGENOM" id="CLU_100149_0_1_6"/>
<dbReference type="UniPathway" id="UPA00241">
    <property type="reaction ID" value="UER00355"/>
</dbReference>
<dbReference type="GO" id="GO:0005737">
    <property type="term" value="C:cytoplasm"/>
    <property type="evidence" value="ECO:0007669"/>
    <property type="project" value="UniProtKB-SubCell"/>
</dbReference>
<dbReference type="GO" id="GO:0008771">
    <property type="term" value="F:[citrate (pro-3S)-lyase] ligase activity"/>
    <property type="evidence" value="ECO:0007669"/>
    <property type="project" value="InterPro"/>
</dbReference>
<dbReference type="GO" id="GO:0005524">
    <property type="term" value="F:ATP binding"/>
    <property type="evidence" value="ECO:0007669"/>
    <property type="project" value="UniProtKB-KW"/>
</dbReference>
<dbReference type="GO" id="GO:0004595">
    <property type="term" value="F:pantetheine-phosphate adenylyltransferase activity"/>
    <property type="evidence" value="ECO:0007669"/>
    <property type="project" value="UniProtKB-UniRule"/>
</dbReference>
<dbReference type="GO" id="GO:0015937">
    <property type="term" value="P:coenzyme A biosynthetic process"/>
    <property type="evidence" value="ECO:0007669"/>
    <property type="project" value="UniProtKB-UniRule"/>
</dbReference>
<dbReference type="CDD" id="cd02163">
    <property type="entry name" value="PPAT"/>
    <property type="match status" value="1"/>
</dbReference>
<dbReference type="Gene3D" id="3.40.50.620">
    <property type="entry name" value="HUPs"/>
    <property type="match status" value="1"/>
</dbReference>
<dbReference type="HAMAP" id="MF_00151">
    <property type="entry name" value="PPAT_bact"/>
    <property type="match status" value="1"/>
</dbReference>
<dbReference type="InterPro" id="IPR013166">
    <property type="entry name" value="Citrate_lyase_ligase_C"/>
</dbReference>
<dbReference type="InterPro" id="IPR004821">
    <property type="entry name" value="Cyt_trans-like"/>
</dbReference>
<dbReference type="InterPro" id="IPR001980">
    <property type="entry name" value="PPAT"/>
</dbReference>
<dbReference type="InterPro" id="IPR014729">
    <property type="entry name" value="Rossmann-like_a/b/a_fold"/>
</dbReference>
<dbReference type="NCBIfam" id="TIGR01510">
    <property type="entry name" value="coaD_prev_kdtB"/>
    <property type="match status" value="1"/>
</dbReference>
<dbReference type="NCBIfam" id="TIGR00125">
    <property type="entry name" value="cyt_tran_rel"/>
    <property type="match status" value="1"/>
</dbReference>
<dbReference type="PANTHER" id="PTHR21342">
    <property type="entry name" value="PHOSPHOPANTETHEINE ADENYLYLTRANSFERASE"/>
    <property type="match status" value="1"/>
</dbReference>
<dbReference type="PANTHER" id="PTHR21342:SF1">
    <property type="entry name" value="PHOSPHOPANTETHEINE ADENYLYLTRANSFERASE"/>
    <property type="match status" value="1"/>
</dbReference>
<dbReference type="Pfam" id="PF01467">
    <property type="entry name" value="CTP_transf_like"/>
    <property type="match status" value="1"/>
</dbReference>
<dbReference type="PRINTS" id="PR01020">
    <property type="entry name" value="LPSBIOSNTHSS"/>
</dbReference>
<dbReference type="SMART" id="SM00764">
    <property type="entry name" value="Citrate_ly_lig"/>
    <property type="match status" value="1"/>
</dbReference>
<dbReference type="SUPFAM" id="SSF52374">
    <property type="entry name" value="Nucleotidylyl transferase"/>
    <property type="match status" value="1"/>
</dbReference>
<comment type="function">
    <text evidence="1">Reversibly transfers an adenylyl group from ATP to 4'-phosphopantetheine, yielding dephospho-CoA (dPCoA) and pyrophosphate.</text>
</comment>
<comment type="catalytic activity">
    <reaction evidence="1">
        <text>(R)-4'-phosphopantetheine + ATP + H(+) = 3'-dephospho-CoA + diphosphate</text>
        <dbReference type="Rhea" id="RHEA:19801"/>
        <dbReference type="ChEBI" id="CHEBI:15378"/>
        <dbReference type="ChEBI" id="CHEBI:30616"/>
        <dbReference type="ChEBI" id="CHEBI:33019"/>
        <dbReference type="ChEBI" id="CHEBI:57328"/>
        <dbReference type="ChEBI" id="CHEBI:61723"/>
        <dbReference type="EC" id="2.7.7.3"/>
    </reaction>
</comment>
<comment type="cofactor">
    <cofactor evidence="1">
        <name>Mg(2+)</name>
        <dbReference type="ChEBI" id="CHEBI:18420"/>
    </cofactor>
</comment>
<comment type="pathway">
    <text evidence="1">Cofactor biosynthesis; coenzyme A biosynthesis; CoA from (R)-pantothenate: step 4/5.</text>
</comment>
<comment type="subunit">
    <text evidence="1">Homohexamer.</text>
</comment>
<comment type="subcellular location">
    <subcellularLocation>
        <location evidence="1">Cytoplasm</location>
    </subcellularLocation>
</comment>
<comment type="similarity">
    <text evidence="1">Belongs to the bacterial CoaD family.</text>
</comment>
<sequence length="159" mass="17771">MNRVLYPGTFDPITKGHGDLIERASRLFDHVIIAVAASPKKNPLFSLEQRVALAQEVTKHLPNVEVVGFSTLLAHFVKEQKANVFLRGLRAVSDFEYEFQLANMNRQLAPDVESMFLTPSEKYSFISSTLVREIAALGGDISKFVHPAVADALAERFKR</sequence>
<name>COAD_PSEA8</name>
<gene>
    <name evidence="1" type="primary">coaD</name>
    <name type="ordered locus">PLES_03601</name>
</gene>